<dbReference type="EC" id="5.4.2.11" evidence="1"/>
<dbReference type="EMBL" id="CP000901">
    <property type="protein sequence ID" value="ABX88357.1"/>
    <property type="molecule type" value="Genomic_DNA"/>
</dbReference>
<dbReference type="RefSeq" id="WP_002210746.1">
    <property type="nucleotide sequence ID" value="NZ_CP009935.1"/>
</dbReference>
<dbReference type="SMR" id="A9R3B3"/>
<dbReference type="GeneID" id="57977273"/>
<dbReference type="KEGG" id="ypg:YpAngola_A1407"/>
<dbReference type="PATRIC" id="fig|349746.12.peg.2372"/>
<dbReference type="UniPathway" id="UPA00109">
    <property type="reaction ID" value="UER00186"/>
</dbReference>
<dbReference type="GO" id="GO:0004619">
    <property type="term" value="F:phosphoglycerate mutase activity"/>
    <property type="evidence" value="ECO:0007669"/>
    <property type="project" value="UniProtKB-EC"/>
</dbReference>
<dbReference type="GO" id="GO:0006094">
    <property type="term" value="P:gluconeogenesis"/>
    <property type="evidence" value="ECO:0007669"/>
    <property type="project" value="UniProtKB-UniRule"/>
</dbReference>
<dbReference type="GO" id="GO:0006096">
    <property type="term" value="P:glycolytic process"/>
    <property type="evidence" value="ECO:0007669"/>
    <property type="project" value="UniProtKB-UniRule"/>
</dbReference>
<dbReference type="CDD" id="cd07067">
    <property type="entry name" value="HP_PGM_like"/>
    <property type="match status" value="1"/>
</dbReference>
<dbReference type="FunFam" id="3.40.50.1240:FF:000003">
    <property type="entry name" value="2,3-bisphosphoglycerate-dependent phosphoglycerate mutase"/>
    <property type="match status" value="1"/>
</dbReference>
<dbReference type="Gene3D" id="3.40.50.1240">
    <property type="entry name" value="Phosphoglycerate mutase-like"/>
    <property type="match status" value="1"/>
</dbReference>
<dbReference type="HAMAP" id="MF_01039">
    <property type="entry name" value="PGAM_GpmA"/>
    <property type="match status" value="1"/>
</dbReference>
<dbReference type="InterPro" id="IPR013078">
    <property type="entry name" value="His_Pase_superF_clade-1"/>
</dbReference>
<dbReference type="InterPro" id="IPR029033">
    <property type="entry name" value="His_PPase_superfam"/>
</dbReference>
<dbReference type="InterPro" id="IPR001345">
    <property type="entry name" value="PG/BPGM_mutase_AS"/>
</dbReference>
<dbReference type="InterPro" id="IPR005952">
    <property type="entry name" value="Phosphogly_mut1"/>
</dbReference>
<dbReference type="NCBIfam" id="TIGR01258">
    <property type="entry name" value="pgm_1"/>
    <property type="match status" value="1"/>
</dbReference>
<dbReference type="NCBIfam" id="NF010713">
    <property type="entry name" value="PRK14115.1"/>
    <property type="match status" value="1"/>
</dbReference>
<dbReference type="PANTHER" id="PTHR11931">
    <property type="entry name" value="PHOSPHOGLYCERATE MUTASE"/>
    <property type="match status" value="1"/>
</dbReference>
<dbReference type="Pfam" id="PF00300">
    <property type="entry name" value="His_Phos_1"/>
    <property type="match status" value="1"/>
</dbReference>
<dbReference type="PIRSF" id="PIRSF000709">
    <property type="entry name" value="6PFK_2-Ptase"/>
    <property type="match status" value="1"/>
</dbReference>
<dbReference type="SMART" id="SM00855">
    <property type="entry name" value="PGAM"/>
    <property type="match status" value="1"/>
</dbReference>
<dbReference type="SUPFAM" id="SSF53254">
    <property type="entry name" value="Phosphoglycerate mutase-like"/>
    <property type="match status" value="1"/>
</dbReference>
<dbReference type="PROSITE" id="PS00175">
    <property type="entry name" value="PG_MUTASE"/>
    <property type="match status" value="1"/>
</dbReference>
<protein>
    <recommendedName>
        <fullName evidence="1">2,3-bisphosphoglycerate-dependent phosphoglycerate mutase</fullName>
        <shortName evidence="1">BPG-dependent PGAM</shortName>
        <shortName evidence="1">PGAM</shortName>
        <shortName evidence="1">Phosphoglyceromutase</shortName>
        <shortName evidence="1">dPGM</shortName>
        <ecNumber evidence="1">5.4.2.11</ecNumber>
    </recommendedName>
</protein>
<accession>A9R3B3</accession>
<feature type="chain" id="PRO_1000135997" description="2,3-bisphosphoglycerate-dependent phosphoglycerate mutase">
    <location>
        <begin position="1"/>
        <end position="250"/>
    </location>
</feature>
<feature type="active site" description="Tele-phosphohistidine intermediate" evidence="1">
    <location>
        <position position="11"/>
    </location>
</feature>
<feature type="active site" description="Proton donor/acceptor" evidence="1">
    <location>
        <position position="89"/>
    </location>
</feature>
<feature type="binding site" evidence="1">
    <location>
        <begin position="10"/>
        <end position="17"/>
    </location>
    <ligand>
        <name>substrate</name>
    </ligand>
</feature>
<feature type="binding site" evidence="1">
    <location>
        <begin position="23"/>
        <end position="24"/>
    </location>
    <ligand>
        <name>substrate</name>
    </ligand>
</feature>
<feature type="binding site" evidence="1">
    <location>
        <position position="62"/>
    </location>
    <ligand>
        <name>substrate</name>
    </ligand>
</feature>
<feature type="binding site" evidence="1">
    <location>
        <begin position="89"/>
        <end position="92"/>
    </location>
    <ligand>
        <name>substrate</name>
    </ligand>
</feature>
<feature type="binding site" evidence="1">
    <location>
        <position position="100"/>
    </location>
    <ligand>
        <name>substrate</name>
    </ligand>
</feature>
<feature type="binding site" evidence="1">
    <location>
        <begin position="116"/>
        <end position="117"/>
    </location>
    <ligand>
        <name>substrate</name>
    </ligand>
</feature>
<feature type="binding site" evidence="1">
    <location>
        <begin position="185"/>
        <end position="186"/>
    </location>
    <ligand>
        <name>substrate</name>
    </ligand>
</feature>
<feature type="site" description="Transition state stabilizer" evidence="1">
    <location>
        <position position="184"/>
    </location>
</feature>
<name>GPMA_YERPG</name>
<keyword id="KW-0312">Gluconeogenesis</keyword>
<keyword id="KW-0324">Glycolysis</keyword>
<keyword id="KW-0413">Isomerase</keyword>
<gene>
    <name evidence="1" type="primary">gpmA</name>
    <name type="ordered locus">YpAngola_A1407</name>
</gene>
<reference key="1">
    <citation type="journal article" date="2010" name="J. Bacteriol.">
        <title>Genome sequence of the deep-rooted Yersinia pestis strain Angola reveals new insights into the evolution and pangenome of the plague bacterium.</title>
        <authorList>
            <person name="Eppinger M."/>
            <person name="Worsham P.L."/>
            <person name="Nikolich M.P."/>
            <person name="Riley D.R."/>
            <person name="Sebastian Y."/>
            <person name="Mou S."/>
            <person name="Achtman M."/>
            <person name="Lindler L.E."/>
            <person name="Ravel J."/>
        </authorList>
    </citation>
    <scope>NUCLEOTIDE SEQUENCE [LARGE SCALE GENOMIC DNA]</scope>
    <source>
        <strain>Angola</strain>
    </source>
</reference>
<comment type="function">
    <text evidence="1">Catalyzes the interconversion of 2-phosphoglycerate and 3-phosphoglycerate.</text>
</comment>
<comment type="catalytic activity">
    <reaction evidence="1">
        <text>(2R)-2-phosphoglycerate = (2R)-3-phosphoglycerate</text>
        <dbReference type="Rhea" id="RHEA:15901"/>
        <dbReference type="ChEBI" id="CHEBI:58272"/>
        <dbReference type="ChEBI" id="CHEBI:58289"/>
        <dbReference type="EC" id="5.4.2.11"/>
    </reaction>
</comment>
<comment type="pathway">
    <text evidence="1">Carbohydrate degradation; glycolysis; pyruvate from D-glyceraldehyde 3-phosphate: step 3/5.</text>
</comment>
<comment type="subunit">
    <text evidence="1">Homodimer.</text>
</comment>
<comment type="similarity">
    <text evidence="1">Belongs to the phosphoglycerate mutase family. BPG-dependent PGAM subfamily.</text>
</comment>
<evidence type="ECO:0000255" key="1">
    <source>
        <dbReference type="HAMAP-Rule" id="MF_01039"/>
    </source>
</evidence>
<organism>
    <name type="scientific">Yersinia pestis bv. Antiqua (strain Angola)</name>
    <dbReference type="NCBI Taxonomy" id="349746"/>
    <lineage>
        <taxon>Bacteria</taxon>
        <taxon>Pseudomonadati</taxon>
        <taxon>Pseudomonadota</taxon>
        <taxon>Gammaproteobacteria</taxon>
        <taxon>Enterobacterales</taxon>
        <taxon>Yersiniaceae</taxon>
        <taxon>Yersinia</taxon>
    </lineage>
</organism>
<sequence>MAVTKLVLVRHGESQWNNENRFTGWYDVDLSEKGRSEAKAAGKLLKDEGFTFDFAYTSVLKRAIHTLWNILDELDQAWLPTEKTWKLNERHYGALQGLNKSETAEKYGDEQVKQWRRGFAITPPALEKSDERFPGHDPRYAKLTDAELPTTESLALTIERVIPYWNDVIKPRIASGERVIIAAHGNSLRALVKYLDDLGEDEILELNIPTGVPLVYEFDENFKPIKHYYLGNADEIAAKAAAVANQGKAK</sequence>
<proteinExistence type="inferred from homology"/>